<keyword id="KW-0333">Golgi apparatus</keyword>
<keyword id="KW-0378">Hydrolase</keyword>
<keyword id="KW-1185">Reference proteome</keyword>
<evidence type="ECO:0000250" key="1"/>
<evidence type="ECO:0000305" key="2"/>
<feature type="chain" id="PRO_0000280681" description="2',3'-cyclic-nucleotide 3'-phosphodiesterase">
    <location>
        <begin position="1"/>
        <end position="216"/>
    </location>
</feature>
<feature type="active site" description="Proton donor/acceptor" evidence="1">
    <location>
        <position position="39"/>
    </location>
</feature>
<feature type="active site" description="Proton donor/acceptor" evidence="1">
    <location>
        <position position="153"/>
    </location>
</feature>
<feature type="binding site" evidence="1">
    <location>
        <position position="41"/>
    </location>
    <ligand>
        <name>substrate</name>
    </ligand>
</feature>
<feature type="binding site" evidence="1">
    <location>
        <position position="155"/>
    </location>
    <ligand>
        <name>substrate</name>
    </ligand>
</feature>
<feature type="binding site" evidence="1">
    <location>
        <position position="158"/>
    </location>
    <ligand>
        <name>substrate</name>
    </ligand>
</feature>
<gene>
    <name type="primary">CPD1</name>
    <name type="ordered locus">YALI0A20295g</name>
</gene>
<proteinExistence type="inferred from homology"/>
<protein>
    <recommendedName>
        <fullName>2',3'-cyclic-nucleotide 3'-phosphodiesterase</fullName>
        <shortName>CPDase</shortName>
        <ecNumber>3.1.4.37</ecNumber>
    </recommendedName>
</protein>
<reference key="1">
    <citation type="journal article" date="2004" name="Nature">
        <title>Genome evolution in yeasts.</title>
        <authorList>
            <person name="Dujon B."/>
            <person name="Sherman D."/>
            <person name="Fischer G."/>
            <person name="Durrens P."/>
            <person name="Casaregola S."/>
            <person name="Lafontaine I."/>
            <person name="de Montigny J."/>
            <person name="Marck C."/>
            <person name="Neuveglise C."/>
            <person name="Talla E."/>
            <person name="Goffard N."/>
            <person name="Frangeul L."/>
            <person name="Aigle M."/>
            <person name="Anthouard V."/>
            <person name="Babour A."/>
            <person name="Barbe V."/>
            <person name="Barnay S."/>
            <person name="Blanchin S."/>
            <person name="Beckerich J.-M."/>
            <person name="Beyne E."/>
            <person name="Bleykasten C."/>
            <person name="Boisrame A."/>
            <person name="Boyer J."/>
            <person name="Cattolico L."/>
            <person name="Confanioleri F."/>
            <person name="de Daruvar A."/>
            <person name="Despons L."/>
            <person name="Fabre E."/>
            <person name="Fairhead C."/>
            <person name="Ferry-Dumazet H."/>
            <person name="Groppi A."/>
            <person name="Hantraye F."/>
            <person name="Hennequin C."/>
            <person name="Jauniaux N."/>
            <person name="Joyet P."/>
            <person name="Kachouri R."/>
            <person name="Kerrest A."/>
            <person name="Koszul R."/>
            <person name="Lemaire M."/>
            <person name="Lesur I."/>
            <person name="Ma L."/>
            <person name="Muller H."/>
            <person name="Nicaud J.-M."/>
            <person name="Nikolski M."/>
            <person name="Oztas S."/>
            <person name="Ozier-Kalogeropoulos O."/>
            <person name="Pellenz S."/>
            <person name="Potier S."/>
            <person name="Richard G.-F."/>
            <person name="Straub M.-L."/>
            <person name="Suleau A."/>
            <person name="Swennen D."/>
            <person name="Tekaia F."/>
            <person name="Wesolowski-Louvel M."/>
            <person name="Westhof E."/>
            <person name="Wirth B."/>
            <person name="Zeniou-Meyer M."/>
            <person name="Zivanovic Y."/>
            <person name="Bolotin-Fukuhara M."/>
            <person name="Thierry A."/>
            <person name="Bouchier C."/>
            <person name="Caudron B."/>
            <person name="Scarpelli C."/>
            <person name="Gaillardin C."/>
            <person name="Weissenbach J."/>
            <person name="Wincker P."/>
            <person name="Souciet J.-L."/>
        </authorList>
    </citation>
    <scope>NUCLEOTIDE SEQUENCE [LARGE SCALE GENOMIC DNA]</scope>
    <source>
        <strain>CLIB 122 / E 150</strain>
    </source>
</reference>
<organism>
    <name type="scientific">Yarrowia lipolytica (strain CLIB 122 / E 150)</name>
    <name type="common">Yeast</name>
    <name type="synonym">Candida lipolytica</name>
    <dbReference type="NCBI Taxonomy" id="284591"/>
    <lineage>
        <taxon>Eukaryota</taxon>
        <taxon>Fungi</taxon>
        <taxon>Dikarya</taxon>
        <taxon>Ascomycota</taxon>
        <taxon>Saccharomycotina</taxon>
        <taxon>Dipodascomycetes</taxon>
        <taxon>Dipodascales</taxon>
        <taxon>Dipodascales incertae sedis</taxon>
        <taxon>Yarrowia</taxon>
    </lineage>
</organism>
<name>CPD1_YARLI</name>
<accession>Q6CGD3</accession>
<comment type="function">
    <text evidence="1">Involved in the metabolism of ADP-ribose 1',2'-cyclic phosphate which is produced as a consequence of tRNA splicing.</text>
</comment>
<comment type="catalytic activity">
    <reaction>
        <text>a nucleoside 2',3'-cyclic phosphate + H2O = a nucleoside 2'-phosphate + H(+)</text>
        <dbReference type="Rhea" id="RHEA:14489"/>
        <dbReference type="ChEBI" id="CHEBI:15377"/>
        <dbReference type="ChEBI" id="CHEBI:15378"/>
        <dbReference type="ChEBI" id="CHEBI:66954"/>
        <dbReference type="ChEBI" id="CHEBI:78552"/>
        <dbReference type="EC" id="3.1.4.37"/>
    </reaction>
</comment>
<comment type="subcellular location">
    <subcellularLocation>
        <location evidence="1">Golgi apparatus</location>
    </subcellularLocation>
</comment>
<comment type="similarity">
    <text evidence="2">Belongs to the 2H phosphoesterase superfamily. CPD1 family.</text>
</comment>
<sequence length="216" mass="24632">MGTSLWLQPPRNSPIWQQLATTIQGLKPIFSDSENFEPHITLTSNISVNTQGQVDFVLDRAVAAAKCVPQGFQIHLSSVKYGSRFFKKVYLQVEPTPELLSLARICREDFVYMPEAMSQARNYQAMSAEERQKIDTQVGQRAAEWTRNEYDPHVSLVYSDLYPVEDADRRTIETRLEDTFGSGYDESGLGWKNGRFALVRCEGPVDEWEVLGVRDF</sequence>
<dbReference type="EC" id="3.1.4.37"/>
<dbReference type="EMBL" id="CR382127">
    <property type="protein sequence ID" value="CAG84217.2"/>
    <property type="molecule type" value="Genomic_DNA"/>
</dbReference>
<dbReference type="RefSeq" id="XP_500279.2">
    <property type="nucleotide sequence ID" value="XM_500279.2"/>
</dbReference>
<dbReference type="SMR" id="Q6CGD3"/>
<dbReference type="FunCoup" id="Q6CGD3">
    <property type="interactions" value="5"/>
</dbReference>
<dbReference type="STRING" id="284591.Q6CGD3"/>
<dbReference type="EnsemblFungi" id="CAG84217">
    <property type="protein sequence ID" value="CAG84217"/>
    <property type="gene ID" value="YALI0_A20295g"/>
</dbReference>
<dbReference type="KEGG" id="yli:2906534"/>
<dbReference type="VEuPathDB" id="FungiDB:YALI0_A20295g"/>
<dbReference type="HOGENOM" id="CLU_088289_0_0_1"/>
<dbReference type="InParanoid" id="Q6CGD3"/>
<dbReference type="OMA" id="FEPHITI"/>
<dbReference type="OrthoDB" id="121323at4891"/>
<dbReference type="Proteomes" id="UP000001300">
    <property type="component" value="Chromosome A"/>
</dbReference>
<dbReference type="GO" id="GO:0005794">
    <property type="term" value="C:Golgi apparatus"/>
    <property type="evidence" value="ECO:0007669"/>
    <property type="project" value="UniProtKB-SubCell"/>
</dbReference>
<dbReference type="GO" id="GO:0004113">
    <property type="term" value="F:2',3'-cyclic-nucleotide 3'-phosphodiesterase activity"/>
    <property type="evidence" value="ECO:0000318"/>
    <property type="project" value="GO_Central"/>
</dbReference>
<dbReference type="GO" id="GO:0009187">
    <property type="term" value="P:cyclic nucleotide metabolic process"/>
    <property type="evidence" value="ECO:0000318"/>
    <property type="project" value="GO_Central"/>
</dbReference>
<dbReference type="Gene3D" id="3.90.1140.10">
    <property type="entry name" value="Cyclic phosphodiesterase"/>
    <property type="match status" value="1"/>
</dbReference>
<dbReference type="InterPro" id="IPR012386">
    <property type="entry name" value="Cyclic-nucl_3Pdiesterase"/>
</dbReference>
<dbReference type="InterPro" id="IPR009097">
    <property type="entry name" value="Cyclic_Pdiesterase"/>
</dbReference>
<dbReference type="PANTHER" id="PTHR28141">
    <property type="entry name" value="2',3'-CYCLIC-NUCLEOTIDE 3'-PHOSPHODIESTERASE"/>
    <property type="match status" value="1"/>
</dbReference>
<dbReference type="PANTHER" id="PTHR28141:SF1">
    <property type="entry name" value="2',3'-CYCLIC-NUCLEOTIDE 3'-PHOSPHODIESTERASE"/>
    <property type="match status" value="1"/>
</dbReference>
<dbReference type="Pfam" id="PF07823">
    <property type="entry name" value="CPDase"/>
    <property type="match status" value="1"/>
</dbReference>
<dbReference type="SUPFAM" id="SSF55144">
    <property type="entry name" value="LigT-like"/>
    <property type="match status" value="1"/>
</dbReference>